<comment type="function">
    <text evidence="2">One of the essential components for the initiation of protein synthesis. Protects formylmethionyl-tRNA from spontaneous hydrolysis and promotes its binding to the 30S ribosomal subunits. Also involved in the hydrolysis of GTP during the formation of the 70S ribosomal complex.</text>
</comment>
<comment type="subcellular location">
    <subcellularLocation>
        <location evidence="2">Cytoplasm</location>
    </subcellularLocation>
</comment>
<comment type="similarity">
    <text evidence="2">Belongs to the TRAFAC class translation factor GTPase superfamily. Classic translation factor GTPase family. IF-2 subfamily.</text>
</comment>
<name>IF2_YERP3</name>
<protein>
    <recommendedName>
        <fullName evidence="2">Translation initiation factor IF-2</fullName>
    </recommendedName>
</protein>
<accession>A7FMS2</accession>
<evidence type="ECO:0000250" key="1"/>
<evidence type="ECO:0000255" key="2">
    <source>
        <dbReference type="HAMAP-Rule" id="MF_00100"/>
    </source>
</evidence>
<evidence type="ECO:0000256" key="3">
    <source>
        <dbReference type="SAM" id="MobiDB-lite"/>
    </source>
</evidence>
<feature type="chain" id="PRO_1000057663" description="Translation initiation factor IF-2">
    <location>
        <begin position="1"/>
        <end position="892"/>
    </location>
</feature>
<feature type="domain" description="tr-type G">
    <location>
        <begin position="391"/>
        <end position="560"/>
    </location>
</feature>
<feature type="region of interest" description="Disordered" evidence="3">
    <location>
        <begin position="65"/>
        <end position="296"/>
    </location>
</feature>
<feature type="region of interest" description="G1" evidence="1">
    <location>
        <begin position="400"/>
        <end position="407"/>
    </location>
</feature>
<feature type="region of interest" description="G2" evidence="1">
    <location>
        <begin position="425"/>
        <end position="429"/>
    </location>
</feature>
<feature type="region of interest" description="G3" evidence="1">
    <location>
        <begin position="446"/>
        <end position="449"/>
    </location>
</feature>
<feature type="region of interest" description="G4" evidence="1">
    <location>
        <begin position="500"/>
        <end position="503"/>
    </location>
</feature>
<feature type="region of interest" description="G5" evidence="1">
    <location>
        <begin position="536"/>
        <end position="538"/>
    </location>
</feature>
<feature type="compositionally biased region" description="Polar residues" evidence="3">
    <location>
        <begin position="68"/>
        <end position="82"/>
    </location>
</feature>
<feature type="compositionally biased region" description="Basic and acidic residues" evidence="3">
    <location>
        <begin position="99"/>
        <end position="217"/>
    </location>
</feature>
<feature type="compositionally biased region" description="Polar residues" evidence="3">
    <location>
        <begin position="224"/>
        <end position="237"/>
    </location>
</feature>
<feature type="compositionally biased region" description="Basic and acidic residues" evidence="3">
    <location>
        <begin position="239"/>
        <end position="254"/>
    </location>
</feature>
<feature type="compositionally biased region" description="Basic residues" evidence="3">
    <location>
        <begin position="255"/>
        <end position="269"/>
    </location>
</feature>
<feature type="compositionally biased region" description="Basic and acidic residues" evidence="3">
    <location>
        <begin position="270"/>
        <end position="283"/>
    </location>
</feature>
<feature type="binding site" evidence="2">
    <location>
        <begin position="400"/>
        <end position="407"/>
    </location>
    <ligand>
        <name>GTP</name>
        <dbReference type="ChEBI" id="CHEBI:37565"/>
    </ligand>
</feature>
<feature type="binding site" evidence="2">
    <location>
        <begin position="446"/>
        <end position="450"/>
    </location>
    <ligand>
        <name>GTP</name>
        <dbReference type="ChEBI" id="CHEBI:37565"/>
    </ligand>
</feature>
<feature type="binding site" evidence="2">
    <location>
        <begin position="500"/>
        <end position="503"/>
    </location>
    <ligand>
        <name>GTP</name>
        <dbReference type="ChEBI" id="CHEBI:37565"/>
    </ligand>
</feature>
<sequence length="892" mass="97567">MTDVTVKSLAAEIQTPVDRLVQQFADAGIKKSDVDSVTQQEKEILLAHLNREHGSVPNKLTLQRKTRSTLNIPSTGGKSKSVQIEVRKKRTYVNTPEAEQAKAEEQAQREAEEQAQREAEATAQKIAEEKAKREAEEQAKREAAEKAKRQAAEKEKVTNQQTDEKTKPAQTDKARREAEAAELKRSVEEETRRKVEEDAKRVAEEARKMAAENEGKWPEPVAEQTESADYHVTTSQHARAAEDENDAKVEGDRRSRTRGGKATKQKKGNKLSESKADREEARAVGRKGKRKPSTLQQSFNKPVVAVNRDVVIGETVTVAELANKMAVKGSQVIKAMMKLGAMATINQVIDQETAQLVAEEMGHKVILRRENELEEALMSDRDIGVEAAAEHRAPVVTIMGHVDHGKTSLLDYIRSTKVASGEAGGITQHIGAYHVETENGMITFLDTPGHAAFTSMRARGAQATDIVVLVVAADDGVMPQTIEAIQHAKAANVPVVVAVNKIDKPEADPDRVKTELSQYGIQPEEWGGESQFINVSAKAGIGIDELLNAILLQAEVLELKAVRTGMANGVVIESFLDKGRGPVATVLVQQGTLNKGDIVLCGFEYGRVRAMRDELGRDITSAGPSIPVEILGLSSVPAAGDEVTVVRDEKKAREVALYRQGKFREVKLARQQKSKLENMFANMTEGEVSELNIVIKSDVQGSCEAICDSLEKLSTDEVKVRIVGSGVGGITETDATLAAASGAIILGFNVRADASARRVVETEGLDLRYYSVIYSLIDEVKQAMSGMLAPEYKQQIIGLAEVRDVFKSPKFGAIAGCMVTEGVIKRNNPIRVLRDNVVIYEGELESLRRFKDDVSEVRNGMECGIGVKNYNDVRTGDVIEVFEIIEIKRTIA</sequence>
<gene>
    <name evidence="2" type="primary">infB</name>
    <name type="ordered locus">YpsIP31758_3596</name>
</gene>
<reference key="1">
    <citation type="journal article" date="2007" name="PLoS Genet.">
        <title>The complete genome sequence of Yersinia pseudotuberculosis IP31758, the causative agent of Far East scarlet-like fever.</title>
        <authorList>
            <person name="Eppinger M."/>
            <person name="Rosovitz M.J."/>
            <person name="Fricke W.F."/>
            <person name="Rasko D.A."/>
            <person name="Kokorina G."/>
            <person name="Fayolle C."/>
            <person name="Lindler L.E."/>
            <person name="Carniel E."/>
            <person name="Ravel J."/>
        </authorList>
    </citation>
    <scope>NUCLEOTIDE SEQUENCE [LARGE SCALE GENOMIC DNA]</scope>
    <source>
        <strain>IP 31758</strain>
    </source>
</reference>
<dbReference type="EMBL" id="CP000720">
    <property type="protein sequence ID" value="ABS46941.1"/>
    <property type="molecule type" value="Genomic_DNA"/>
</dbReference>
<dbReference type="RefSeq" id="WP_002223151.1">
    <property type="nucleotide sequence ID" value="NC_009708.1"/>
</dbReference>
<dbReference type="SMR" id="A7FMS2"/>
<dbReference type="GeneID" id="49787518"/>
<dbReference type="KEGG" id="ypi:YpsIP31758_3596"/>
<dbReference type="HOGENOM" id="CLU_006301_6_3_6"/>
<dbReference type="Proteomes" id="UP000002412">
    <property type="component" value="Chromosome"/>
</dbReference>
<dbReference type="GO" id="GO:0005829">
    <property type="term" value="C:cytosol"/>
    <property type="evidence" value="ECO:0007669"/>
    <property type="project" value="TreeGrafter"/>
</dbReference>
<dbReference type="GO" id="GO:0005525">
    <property type="term" value="F:GTP binding"/>
    <property type="evidence" value="ECO:0007669"/>
    <property type="project" value="UniProtKB-KW"/>
</dbReference>
<dbReference type="GO" id="GO:0003924">
    <property type="term" value="F:GTPase activity"/>
    <property type="evidence" value="ECO:0007669"/>
    <property type="project" value="UniProtKB-UniRule"/>
</dbReference>
<dbReference type="GO" id="GO:0097216">
    <property type="term" value="F:guanosine tetraphosphate binding"/>
    <property type="evidence" value="ECO:0007669"/>
    <property type="project" value="UniProtKB-ARBA"/>
</dbReference>
<dbReference type="GO" id="GO:0003743">
    <property type="term" value="F:translation initiation factor activity"/>
    <property type="evidence" value="ECO:0007669"/>
    <property type="project" value="UniProtKB-UniRule"/>
</dbReference>
<dbReference type="CDD" id="cd01887">
    <property type="entry name" value="IF2_eIF5B"/>
    <property type="match status" value="1"/>
</dbReference>
<dbReference type="CDD" id="cd03702">
    <property type="entry name" value="IF2_mtIF2_II"/>
    <property type="match status" value="1"/>
</dbReference>
<dbReference type="CDD" id="cd03692">
    <property type="entry name" value="mtIF2_IVc"/>
    <property type="match status" value="1"/>
</dbReference>
<dbReference type="FunFam" id="2.40.30.10:FF:000007">
    <property type="entry name" value="Translation initiation factor IF-2"/>
    <property type="match status" value="1"/>
</dbReference>
<dbReference type="FunFam" id="2.40.30.10:FF:000008">
    <property type="entry name" value="Translation initiation factor IF-2"/>
    <property type="match status" value="1"/>
</dbReference>
<dbReference type="FunFam" id="3.30.56.50:FF:000001">
    <property type="entry name" value="Translation initiation factor IF-2"/>
    <property type="match status" value="1"/>
</dbReference>
<dbReference type="FunFam" id="3.40.50.10050:FF:000001">
    <property type="entry name" value="Translation initiation factor IF-2"/>
    <property type="match status" value="1"/>
</dbReference>
<dbReference type="FunFam" id="3.40.50.300:FF:000019">
    <property type="entry name" value="Translation initiation factor IF-2"/>
    <property type="match status" value="1"/>
</dbReference>
<dbReference type="Gene3D" id="3.40.50.300">
    <property type="entry name" value="P-loop containing nucleotide triphosphate hydrolases"/>
    <property type="match status" value="1"/>
</dbReference>
<dbReference type="Gene3D" id="3.30.56.50">
    <property type="entry name" value="Putative DNA-binding domain, N-terminal subdomain of bacterial translation initiation factor IF2"/>
    <property type="match status" value="1"/>
</dbReference>
<dbReference type="Gene3D" id="2.40.30.10">
    <property type="entry name" value="Translation factors"/>
    <property type="match status" value="2"/>
</dbReference>
<dbReference type="Gene3D" id="3.40.50.10050">
    <property type="entry name" value="Translation initiation factor IF- 2, domain 3"/>
    <property type="match status" value="1"/>
</dbReference>
<dbReference type="HAMAP" id="MF_00100_B">
    <property type="entry name" value="IF_2_B"/>
    <property type="match status" value="1"/>
</dbReference>
<dbReference type="InterPro" id="IPR009061">
    <property type="entry name" value="DNA-bd_dom_put_sf"/>
</dbReference>
<dbReference type="InterPro" id="IPR053905">
    <property type="entry name" value="EF-G-like_DII"/>
</dbReference>
<dbReference type="InterPro" id="IPR004161">
    <property type="entry name" value="EFTu-like_2"/>
</dbReference>
<dbReference type="InterPro" id="IPR013575">
    <property type="entry name" value="IF2_assoc_dom_bac"/>
</dbReference>
<dbReference type="InterPro" id="IPR044145">
    <property type="entry name" value="IF2_II"/>
</dbReference>
<dbReference type="InterPro" id="IPR006847">
    <property type="entry name" value="IF2_N"/>
</dbReference>
<dbReference type="InterPro" id="IPR027417">
    <property type="entry name" value="P-loop_NTPase"/>
</dbReference>
<dbReference type="InterPro" id="IPR005225">
    <property type="entry name" value="Small_GTP-bd"/>
</dbReference>
<dbReference type="InterPro" id="IPR000795">
    <property type="entry name" value="T_Tr_GTP-bd_dom"/>
</dbReference>
<dbReference type="InterPro" id="IPR000178">
    <property type="entry name" value="TF_IF2_bacterial-like"/>
</dbReference>
<dbReference type="InterPro" id="IPR015760">
    <property type="entry name" value="TIF_IF2"/>
</dbReference>
<dbReference type="InterPro" id="IPR023115">
    <property type="entry name" value="TIF_IF2_dom3"/>
</dbReference>
<dbReference type="InterPro" id="IPR036925">
    <property type="entry name" value="TIF_IF2_dom3_sf"/>
</dbReference>
<dbReference type="InterPro" id="IPR009000">
    <property type="entry name" value="Transl_B-barrel_sf"/>
</dbReference>
<dbReference type="NCBIfam" id="TIGR00487">
    <property type="entry name" value="IF-2"/>
    <property type="match status" value="1"/>
</dbReference>
<dbReference type="NCBIfam" id="TIGR00231">
    <property type="entry name" value="small_GTP"/>
    <property type="match status" value="1"/>
</dbReference>
<dbReference type="PANTHER" id="PTHR43381:SF5">
    <property type="entry name" value="TR-TYPE G DOMAIN-CONTAINING PROTEIN"/>
    <property type="match status" value="1"/>
</dbReference>
<dbReference type="PANTHER" id="PTHR43381">
    <property type="entry name" value="TRANSLATION INITIATION FACTOR IF-2-RELATED"/>
    <property type="match status" value="1"/>
</dbReference>
<dbReference type="Pfam" id="PF22042">
    <property type="entry name" value="EF-G_D2"/>
    <property type="match status" value="1"/>
</dbReference>
<dbReference type="Pfam" id="PF00009">
    <property type="entry name" value="GTP_EFTU"/>
    <property type="match status" value="1"/>
</dbReference>
<dbReference type="Pfam" id="PF03144">
    <property type="entry name" value="GTP_EFTU_D2"/>
    <property type="match status" value="1"/>
</dbReference>
<dbReference type="Pfam" id="PF11987">
    <property type="entry name" value="IF-2"/>
    <property type="match status" value="1"/>
</dbReference>
<dbReference type="Pfam" id="PF08364">
    <property type="entry name" value="IF2_assoc"/>
    <property type="match status" value="1"/>
</dbReference>
<dbReference type="Pfam" id="PF04760">
    <property type="entry name" value="IF2_N"/>
    <property type="match status" value="2"/>
</dbReference>
<dbReference type="SUPFAM" id="SSF52156">
    <property type="entry name" value="Initiation factor IF2/eIF5b, domain 3"/>
    <property type="match status" value="1"/>
</dbReference>
<dbReference type="SUPFAM" id="SSF52540">
    <property type="entry name" value="P-loop containing nucleoside triphosphate hydrolases"/>
    <property type="match status" value="1"/>
</dbReference>
<dbReference type="SUPFAM" id="SSF46955">
    <property type="entry name" value="Putative DNA-binding domain"/>
    <property type="match status" value="1"/>
</dbReference>
<dbReference type="SUPFAM" id="SSF50447">
    <property type="entry name" value="Translation proteins"/>
    <property type="match status" value="2"/>
</dbReference>
<dbReference type="PROSITE" id="PS51722">
    <property type="entry name" value="G_TR_2"/>
    <property type="match status" value="1"/>
</dbReference>
<dbReference type="PROSITE" id="PS01176">
    <property type="entry name" value="IF2"/>
    <property type="match status" value="1"/>
</dbReference>
<organism>
    <name type="scientific">Yersinia pseudotuberculosis serotype O:1b (strain IP 31758)</name>
    <dbReference type="NCBI Taxonomy" id="349747"/>
    <lineage>
        <taxon>Bacteria</taxon>
        <taxon>Pseudomonadati</taxon>
        <taxon>Pseudomonadota</taxon>
        <taxon>Gammaproteobacteria</taxon>
        <taxon>Enterobacterales</taxon>
        <taxon>Yersiniaceae</taxon>
        <taxon>Yersinia</taxon>
    </lineage>
</organism>
<proteinExistence type="inferred from homology"/>
<keyword id="KW-0963">Cytoplasm</keyword>
<keyword id="KW-0342">GTP-binding</keyword>
<keyword id="KW-0396">Initiation factor</keyword>
<keyword id="KW-0547">Nucleotide-binding</keyword>
<keyword id="KW-0648">Protein biosynthesis</keyword>